<organism>
    <name type="scientific">Streptococcus pneumoniae serotype 19F (strain G54)</name>
    <dbReference type="NCBI Taxonomy" id="512566"/>
    <lineage>
        <taxon>Bacteria</taxon>
        <taxon>Bacillati</taxon>
        <taxon>Bacillota</taxon>
        <taxon>Bacilli</taxon>
        <taxon>Lactobacillales</taxon>
        <taxon>Streptococcaceae</taxon>
        <taxon>Streptococcus</taxon>
    </lineage>
</organism>
<evidence type="ECO:0000255" key="1">
    <source>
        <dbReference type="HAMAP-Rule" id="MF_00252"/>
    </source>
</evidence>
<dbReference type="EC" id="6.1.1.6" evidence="1"/>
<dbReference type="EMBL" id="CP001015">
    <property type="protein sequence ID" value="ACF55536.1"/>
    <property type="molecule type" value="Genomic_DNA"/>
</dbReference>
<dbReference type="SMR" id="B5E317"/>
<dbReference type="KEGG" id="spx:SPG_0647"/>
<dbReference type="HOGENOM" id="CLU_008255_6_0_9"/>
<dbReference type="GO" id="GO:0005829">
    <property type="term" value="C:cytosol"/>
    <property type="evidence" value="ECO:0007669"/>
    <property type="project" value="TreeGrafter"/>
</dbReference>
<dbReference type="GO" id="GO:0005524">
    <property type="term" value="F:ATP binding"/>
    <property type="evidence" value="ECO:0007669"/>
    <property type="project" value="UniProtKB-UniRule"/>
</dbReference>
<dbReference type="GO" id="GO:0140096">
    <property type="term" value="F:catalytic activity, acting on a protein"/>
    <property type="evidence" value="ECO:0007669"/>
    <property type="project" value="UniProtKB-ARBA"/>
</dbReference>
<dbReference type="GO" id="GO:0004824">
    <property type="term" value="F:lysine-tRNA ligase activity"/>
    <property type="evidence" value="ECO:0007669"/>
    <property type="project" value="UniProtKB-UniRule"/>
</dbReference>
<dbReference type="GO" id="GO:0000287">
    <property type="term" value="F:magnesium ion binding"/>
    <property type="evidence" value="ECO:0007669"/>
    <property type="project" value="UniProtKB-UniRule"/>
</dbReference>
<dbReference type="GO" id="GO:0016740">
    <property type="term" value="F:transferase activity"/>
    <property type="evidence" value="ECO:0007669"/>
    <property type="project" value="UniProtKB-ARBA"/>
</dbReference>
<dbReference type="GO" id="GO:0000049">
    <property type="term" value="F:tRNA binding"/>
    <property type="evidence" value="ECO:0007669"/>
    <property type="project" value="TreeGrafter"/>
</dbReference>
<dbReference type="GO" id="GO:0006430">
    <property type="term" value="P:lysyl-tRNA aminoacylation"/>
    <property type="evidence" value="ECO:0007669"/>
    <property type="project" value="UniProtKB-UniRule"/>
</dbReference>
<dbReference type="CDD" id="cd00775">
    <property type="entry name" value="LysRS_core"/>
    <property type="match status" value="1"/>
</dbReference>
<dbReference type="CDD" id="cd04322">
    <property type="entry name" value="LysRS_N"/>
    <property type="match status" value="1"/>
</dbReference>
<dbReference type="FunFam" id="2.40.50.140:FF:000024">
    <property type="entry name" value="Lysine--tRNA ligase"/>
    <property type="match status" value="1"/>
</dbReference>
<dbReference type="FunFam" id="3.30.930.10:FF:000001">
    <property type="entry name" value="Lysine--tRNA ligase"/>
    <property type="match status" value="1"/>
</dbReference>
<dbReference type="Gene3D" id="3.30.930.10">
    <property type="entry name" value="Bira Bifunctional Protein, Domain 2"/>
    <property type="match status" value="1"/>
</dbReference>
<dbReference type="Gene3D" id="2.40.50.140">
    <property type="entry name" value="Nucleic acid-binding proteins"/>
    <property type="match status" value="1"/>
</dbReference>
<dbReference type="HAMAP" id="MF_00252">
    <property type="entry name" value="Lys_tRNA_synth_class2"/>
    <property type="match status" value="1"/>
</dbReference>
<dbReference type="InterPro" id="IPR004364">
    <property type="entry name" value="Aa-tRNA-synt_II"/>
</dbReference>
<dbReference type="InterPro" id="IPR006195">
    <property type="entry name" value="aa-tRNA-synth_II"/>
</dbReference>
<dbReference type="InterPro" id="IPR045864">
    <property type="entry name" value="aa-tRNA-synth_II/BPL/LPL"/>
</dbReference>
<dbReference type="InterPro" id="IPR002313">
    <property type="entry name" value="Lys-tRNA-ligase_II"/>
</dbReference>
<dbReference type="InterPro" id="IPR034762">
    <property type="entry name" value="Lys-tRNA-ligase_II_bac/euk"/>
</dbReference>
<dbReference type="InterPro" id="IPR044136">
    <property type="entry name" value="Lys-tRNA-ligase_II_N"/>
</dbReference>
<dbReference type="InterPro" id="IPR018149">
    <property type="entry name" value="Lys-tRNA-synth_II_C"/>
</dbReference>
<dbReference type="InterPro" id="IPR012340">
    <property type="entry name" value="NA-bd_OB-fold"/>
</dbReference>
<dbReference type="InterPro" id="IPR004365">
    <property type="entry name" value="NA-bd_OB_tRNA"/>
</dbReference>
<dbReference type="NCBIfam" id="TIGR00499">
    <property type="entry name" value="lysS_bact"/>
    <property type="match status" value="1"/>
</dbReference>
<dbReference type="NCBIfam" id="NF001756">
    <property type="entry name" value="PRK00484.1"/>
    <property type="match status" value="1"/>
</dbReference>
<dbReference type="PANTHER" id="PTHR42918:SF15">
    <property type="entry name" value="LYSINE--TRNA LIGASE, CHLOROPLASTIC_MITOCHONDRIAL"/>
    <property type="match status" value="1"/>
</dbReference>
<dbReference type="PANTHER" id="PTHR42918">
    <property type="entry name" value="LYSYL-TRNA SYNTHETASE"/>
    <property type="match status" value="1"/>
</dbReference>
<dbReference type="Pfam" id="PF00152">
    <property type="entry name" value="tRNA-synt_2"/>
    <property type="match status" value="1"/>
</dbReference>
<dbReference type="Pfam" id="PF01336">
    <property type="entry name" value="tRNA_anti-codon"/>
    <property type="match status" value="1"/>
</dbReference>
<dbReference type="PIRSF" id="PIRSF039101">
    <property type="entry name" value="LysRS2"/>
    <property type="match status" value="1"/>
</dbReference>
<dbReference type="PRINTS" id="PR00982">
    <property type="entry name" value="TRNASYNTHLYS"/>
</dbReference>
<dbReference type="SUPFAM" id="SSF55681">
    <property type="entry name" value="Class II aaRS and biotin synthetases"/>
    <property type="match status" value="1"/>
</dbReference>
<dbReference type="SUPFAM" id="SSF50249">
    <property type="entry name" value="Nucleic acid-binding proteins"/>
    <property type="match status" value="1"/>
</dbReference>
<dbReference type="PROSITE" id="PS50862">
    <property type="entry name" value="AA_TRNA_LIGASE_II"/>
    <property type="match status" value="1"/>
</dbReference>
<protein>
    <recommendedName>
        <fullName evidence="1">Lysine--tRNA ligase</fullName>
        <ecNumber evidence="1">6.1.1.6</ecNumber>
    </recommendedName>
    <alternativeName>
        <fullName evidence="1">Lysyl-tRNA synthetase</fullName>
        <shortName evidence="1">LysRS</shortName>
    </alternativeName>
</protein>
<keyword id="KW-0030">Aminoacyl-tRNA synthetase</keyword>
<keyword id="KW-0067">ATP-binding</keyword>
<keyword id="KW-0963">Cytoplasm</keyword>
<keyword id="KW-0436">Ligase</keyword>
<keyword id="KW-0460">Magnesium</keyword>
<keyword id="KW-0479">Metal-binding</keyword>
<keyword id="KW-0547">Nucleotide-binding</keyword>
<keyword id="KW-0648">Protein biosynthesis</keyword>
<name>SYK_STRP4</name>
<accession>B5E317</accession>
<sequence>MSTEHMEELNDQQIVRREKMAALREQGIDPFGKRFERTANSQELKDKYANLDKEQLHDKNETATIAGRLVTKRGKGKVGFAHLQDREGQIQIYVRKDAVGEENYEIFKKADLGDFLGVEGEVMRTDMGELSIKATHITHLSKALRPLPEKFHGLTDVETIYRKRYLDLISNRESFERFVTRSKIISEIRRYLDQKGFLEVETPVLHNEAGGAAARPFITHHNAQNIDMVLRIATELHLKRLIVGGMERVYEIGRIFRNEGMDATHNPEFTSIEVYQAYADFQDIMDLTEGIIQHAAKSVKGDGPVNYQGTEIKINEPFKRVHMVDAIREITGVDFWQDMTLEEAKAIAAEKKVPVEKHYTEVGHIINAFFEEFVEETLIQPTFVYGHPVAVSPLAKKNPEDQRFTDRFELFIMTKEYGNAFTELNDPIDQLSRFEAQAKAKELGDDEATGIDYDYIEALEYGMPPTGGLGIGIDRLCMLLTDTTTIRDVLLFPTMK</sequence>
<reference key="1">
    <citation type="journal article" date="2001" name="Microb. Drug Resist.">
        <title>Annotated draft genomic sequence from a Streptococcus pneumoniae type 19F clinical isolate.</title>
        <authorList>
            <person name="Dopazo J."/>
            <person name="Mendoza A."/>
            <person name="Herrero J."/>
            <person name="Caldara F."/>
            <person name="Humbert Y."/>
            <person name="Friedli L."/>
            <person name="Guerrier M."/>
            <person name="Grand-Schenk E."/>
            <person name="Gandin C."/>
            <person name="de Francesco M."/>
            <person name="Polissi A."/>
            <person name="Buell G."/>
            <person name="Feger G."/>
            <person name="Garcia E."/>
            <person name="Peitsch M."/>
            <person name="Garcia-Bustos J.F."/>
        </authorList>
    </citation>
    <scope>NUCLEOTIDE SEQUENCE [LARGE SCALE GENOMIC DNA]</scope>
    <source>
        <strain>G54</strain>
    </source>
</reference>
<reference key="2">
    <citation type="submission" date="2008-03" db="EMBL/GenBank/DDBJ databases">
        <title>Pneumococcal beta glucoside metabolism investigated by whole genome comparison.</title>
        <authorList>
            <person name="Mulas L."/>
            <person name="Trappetti C."/>
            <person name="Hakenbeck R."/>
            <person name="Iannelli F."/>
            <person name="Pozzi G."/>
            <person name="Davidsen T.M."/>
            <person name="Tettelin H."/>
            <person name="Oggioni M."/>
        </authorList>
    </citation>
    <scope>NUCLEOTIDE SEQUENCE [LARGE SCALE GENOMIC DNA]</scope>
    <source>
        <strain>G54</strain>
    </source>
</reference>
<feature type="chain" id="PRO_1000101150" description="Lysine--tRNA ligase">
    <location>
        <begin position="1"/>
        <end position="496"/>
    </location>
</feature>
<feature type="binding site" evidence="1">
    <location>
        <position position="409"/>
    </location>
    <ligand>
        <name>Mg(2+)</name>
        <dbReference type="ChEBI" id="CHEBI:18420"/>
        <label>1</label>
    </ligand>
</feature>
<feature type="binding site" evidence="1">
    <location>
        <position position="416"/>
    </location>
    <ligand>
        <name>Mg(2+)</name>
        <dbReference type="ChEBI" id="CHEBI:18420"/>
        <label>1</label>
    </ligand>
</feature>
<feature type="binding site" evidence="1">
    <location>
        <position position="416"/>
    </location>
    <ligand>
        <name>Mg(2+)</name>
        <dbReference type="ChEBI" id="CHEBI:18420"/>
        <label>2</label>
    </ligand>
</feature>
<proteinExistence type="inferred from homology"/>
<gene>
    <name evidence="1" type="primary">lysS</name>
    <name type="ordered locus">SPG_0647</name>
</gene>
<comment type="catalytic activity">
    <reaction evidence="1">
        <text>tRNA(Lys) + L-lysine + ATP = L-lysyl-tRNA(Lys) + AMP + diphosphate</text>
        <dbReference type="Rhea" id="RHEA:20792"/>
        <dbReference type="Rhea" id="RHEA-COMP:9696"/>
        <dbReference type="Rhea" id="RHEA-COMP:9697"/>
        <dbReference type="ChEBI" id="CHEBI:30616"/>
        <dbReference type="ChEBI" id="CHEBI:32551"/>
        <dbReference type="ChEBI" id="CHEBI:33019"/>
        <dbReference type="ChEBI" id="CHEBI:78442"/>
        <dbReference type="ChEBI" id="CHEBI:78529"/>
        <dbReference type="ChEBI" id="CHEBI:456215"/>
        <dbReference type="EC" id="6.1.1.6"/>
    </reaction>
</comment>
<comment type="cofactor">
    <cofactor evidence="1">
        <name>Mg(2+)</name>
        <dbReference type="ChEBI" id="CHEBI:18420"/>
    </cofactor>
    <text evidence="1">Binds 3 Mg(2+) ions per subunit.</text>
</comment>
<comment type="subunit">
    <text evidence="1">Homodimer.</text>
</comment>
<comment type="subcellular location">
    <subcellularLocation>
        <location evidence="1">Cytoplasm</location>
    </subcellularLocation>
</comment>
<comment type="similarity">
    <text evidence="1">Belongs to the class-II aminoacyl-tRNA synthetase family.</text>
</comment>